<protein>
    <recommendedName>
        <fullName>Probable cysteine desulfurase</fullName>
        <ecNumber>2.8.1.7</ecNumber>
    </recommendedName>
</protein>
<reference key="1">
    <citation type="journal article" date="1999" name="DNA Res.">
        <title>Complete genome sequence of an aerobic hyper-thermophilic crenarchaeon, Aeropyrum pernix K1.</title>
        <authorList>
            <person name="Kawarabayasi Y."/>
            <person name="Hino Y."/>
            <person name="Horikawa H."/>
            <person name="Yamazaki S."/>
            <person name="Haikawa Y."/>
            <person name="Jin-no K."/>
            <person name="Takahashi M."/>
            <person name="Sekine M."/>
            <person name="Baba S."/>
            <person name="Ankai A."/>
            <person name="Kosugi H."/>
            <person name="Hosoyama A."/>
            <person name="Fukui S."/>
            <person name="Nagai Y."/>
            <person name="Nishijima K."/>
            <person name="Nakazawa H."/>
            <person name="Takamiya M."/>
            <person name="Masuda S."/>
            <person name="Funahashi T."/>
            <person name="Tanaka T."/>
            <person name="Kudoh Y."/>
            <person name="Yamazaki J."/>
            <person name="Kushida N."/>
            <person name="Oguchi A."/>
            <person name="Aoki K."/>
            <person name="Kubota K."/>
            <person name="Nakamura Y."/>
            <person name="Nomura N."/>
            <person name="Sako Y."/>
            <person name="Kikuchi H."/>
        </authorList>
    </citation>
    <scope>NUCLEOTIDE SEQUENCE [LARGE SCALE GENOMIC DNA]</scope>
    <source>
        <strain>ATCC 700893 / DSM 11879 / JCM 9820 / NBRC 100138 / K1</strain>
    </source>
</reference>
<comment type="catalytic activity">
    <reaction>
        <text>(sulfur carrier)-H + L-cysteine = (sulfur carrier)-SH + L-alanine</text>
        <dbReference type="Rhea" id="RHEA:43892"/>
        <dbReference type="Rhea" id="RHEA-COMP:14737"/>
        <dbReference type="Rhea" id="RHEA-COMP:14739"/>
        <dbReference type="ChEBI" id="CHEBI:29917"/>
        <dbReference type="ChEBI" id="CHEBI:35235"/>
        <dbReference type="ChEBI" id="CHEBI:57972"/>
        <dbReference type="ChEBI" id="CHEBI:64428"/>
        <dbReference type="EC" id="2.8.1.7"/>
    </reaction>
</comment>
<comment type="cofactor">
    <cofactor evidence="1">
        <name>pyridoxal 5'-phosphate</name>
        <dbReference type="ChEBI" id="CHEBI:597326"/>
    </cofactor>
</comment>
<comment type="similarity">
    <text evidence="2">Belongs to the class-V pyridoxal-phosphate-dependent aminotransferase family. Csd subfamily.</text>
</comment>
<gene>
    <name type="primary">csd</name>
    <name type="ordered locus">APE_2023</name>
</gene>
<dbReference type="EC" id="2.8.1.7"/>
<dbReference type="EMBL" id="BA000002">
    <property type="protein sequence ID" value="BAA81033.1"/>
    <property type="molecule type" value="Genomic_DNA"/>
</dbReference>
<dbReference type="PIR" id="A72506">
    <property type="entry name" value="A72506"/>
</dbReference>
<dbReference type="RefSeq" id="WP_010866746.1">
    <property type="nucleotide sequence ID" value="NC_000854.2"/>
</dbReference>
<dbReference type="SMR" id="Q9YAB6"/>
<dbReference type="STRING" id="272557.APE_2023"/>
<dbReference type="EnsemblBacteria" id="BAA81033">
    <property type="protein sequence ID" value="BAA81033"/>
    <property type="gene ID" value="APE_2023"/>
</dbReference>
<dbReference type="GeneID" id="1445136"/>
<dbReference type="KEGG" id="ape:APE_2023"/>
<dbReference type="PATRIC" id="fig|272557.25.peg.1350"/>
<dbReference type="eggNOG" id="arCOG00065">
    <property type="taxonomic scope" value="Archaea"/>
</dbReference>
<dbReference type="Proteomes" id="UP000002518">
    <property type="component" value="Chromosome"/>
</dbReference>
<dbReference type="GO" id="GO:0031071">
    <property type="term" value="F:cysteine desulfurase activity"/>
    <property type="evidence" value="ECO:0007669"/>
    <property type="project" value="UniProtKB-EC"/>
</dbReference>
<dbReference type="GO" id="GO:0030170">
    <property type="term" value="F:pyridoxal phosphate binding"/>
    <property type="evidence" value="ECO:0007669"/>
    <property type="project" value="InterPro"/>
</dbReference>
<dbReference type="GO" id="GO:0006534">
    <property type="term" value="P:cysteine metabolic process"/>
    <property type="evidence" value="ECO:0007669"/>
    <property type="project" value="InterPro"/>
</dbReference>
<dbReference type="CDD" id="cd06453">
    <property type="entry name" value="SufS_like"/>
    <property type="match status" value="1"/>
</dbReference>
<dbReference type="Gene3D" id="3.90.1150.10">
    <property type="entry name" value="Aspartate Aminotransferase, domain 1"/>
    <property type="match status" value="1"/>
</dbReference>
<dbReference type="Gene3D" id="3.40.640.10">
    <property type="entry name" value="Type I PLP-dependent aspartate aminotransferase-like (Major domain)"/>
    <property type="match status" value="1"/>
</dbReference>
<dbReference type="InterPro" id="IPR000192">
    <property type="entry name" value="Aminotrans_V_dom"/>
</dbReference>
<dbReference type="InterPro" id="IPR020578">
    <property type="entry name" value="Aminotrans_V_PyrdxlP_BS"/>
</dbReference>
<dbReference type="InterPro" id="IPR010970">
    <property type="entry name" value="Cys_dSase_SufS"/>
</dbReference>
<dbReference type="InterPro" id="IPR015424">
    <property type="entry name" value="PyrdxlP-dep_Trfase"/>
</dbReference>
<dbReference type="InterPro" id="IPR015421">
    <property type="entry name" value="PyrdxlP-dep_Trfase_major"/>
</dbReference>
<dbReference type="InterPro" id="IPR015422">
    <property type="entry name" value="PyrdxlP-dep_Trfase_small"/>
</dbReference>
<dbReference type="PANTHER" id="PTHR43586">
    <property type="entry name" value="CYSTEINE DESULFURASE"/>
    <property type="match status" value="1"/>
</dbReference>
<dbReference type="PANTHER" id="PTHR43586:SF8">
    <property type="entry name" value="CYSTEINE DESULFURASE 1, CHLOROPLASTIC"/>
    <property type="match status" value="1"/>
</dbReference>
<dbReference type="Pfam" id="PF00266">
    <property type="entry name" value="Aminotran_5"/>
    <property type="match status" value="1"/>
</dbReference>
<dbReference type="SUPFAM" id="SSF53383">
    <property type="entry name" value="PLP-dependent transferases"/>
    <property type="match status" value="1"/>
</dbReference>
<dbReference type="PROSITE" id="PS00595">
    <property type="entry name" value="AA_TRANSFER_CLASS_5"/>
    <property type="match status" value="1"/>
</dbReference>
<name>CSD_AERPE</name>
<proteinExistence type="inferred from homology"/>
<accession>Q9YAB6</accession>
<evidence type="ECO:0000250" key="1"/>
<evidence type="ECO:0000305" key="2"/>
<keyword id="KW-0663">Pyridoxal phosphate</keyword>
<keyword id="KW-1185">Reference proteome</keyword>
<keyword id="KW-0808">Transferase</keyword>
<organism>
    <name type="scientific">Aeropyrum pernix (strain ATCC 700893 / DSM 11879 / JCM 9820 / NBRC 100138 / K1)</name>
    <dbReference type="NCBI Taxonomy" id="272557"/>
    <lineage>
        <taxon>Archaea</taxon>
        <taxon>Thermoproteota</taxon>
        <taxon>Thermoprotei</taxon>
        <taxon>Desulfurococcales</taxon>
        <taxon>Desulfurococcaceae</taxon>
        <taxon>Aeropyrum</taxon>
    </lineage>
</organism>
<sequence>MPRFSCYEVRSEFPELERGIVYLDNAASTLKPRRVVEAMREFSYRSYANVHRGVHRLSMEASKAYEDAHEVVARLVGGSWDEVVFTRNTTEAMQLAALTLAYNGLLRGGEVLVTAADHHSTLLPWVRAARLGGGRARILPLDGRGVPRWDLLEDYITEDTRAVAVGHVSNVTGVVAPVEDIVKAAKKVGALVVLDSAQGVPHLPVDFRRMGVDMAAFSGHKMLGPTGIGVLWARRDLLEELEPPLGGGGTVSRVRLQGGSVEIEWEEPPWKFEAGTPPIIEAVGLAEAANMLMEIGMEHVARHEDELTSHTMKLLEPLYSEGLIRYVGPDKPGERHGIVSITTHLKSPDELGLLLDRRGIAVRTGLHCAHILHDHVDASMGSVWASFYIYNCKEDAERLAEALEEILTTRR</sequence>
<feature type="chain" id="PRO_0000150325" description="Probable cysteine desulfurase">
    <location>
        <begin position="1"/>
        <end position="411"/>
    </location>
</feature>
<feature type="modified residue" description="N6-(pyridoxal phosphate)lysine" evidence="1">
    <location>
        <position position="221"/>
    </location>
</feature>